<gene>
    <name evidence="1" type="primary">queA</name>
    <name type="ordered locus">SbBS512_E0324</name>
</gene>
<comment type="function">
    <text evidence="1">Transfers and isomerizes the ribose moiety from AdoMet to the 7-aminomethyl group of 7-deazaguanine (preQ1-tRNA) to give epoxyqueuosine (oQ-tRNA).</text>
</comment>
<comment type="catalytic activity">
    <reaction evidence="1">
        <text>7-aminomethyl-7-carbaguanosine(34) in tRNA + S-adenosyl-L-methionine = epoxyqueuosine(34) in tRNA + adenine + L-methionine + 2 H(+)</text>
        <dbReference type="Rhea" id="RHEA:32155"/>
        <dbReference type="Rhea" id="RHEA-COMP:10342"/>
        <dbReference type="Rhea" id="RHEA-COMP:18582"/>
        <dbReference type="ChEBI" id="CHEBI:15378"/>
        <dbReference type="ChEBI" id="CHEBI:16708"/>
        <dbReference type="ChEBI" id="CHEBI:57844"/>
        <dbReference type="ChEBI" id="CHEBI:59789"/>
        <dbReference type="ChEBI" id="CHEBI:82833"/>
        <dbReference type="ChEBI" id="CHEBI:194443"/>
        <dbReference type="EC" id="2.4.99.17"/>
    </reaction>
</comment>
<comment type="pathway">
    <text evidence="1">tRNA modification; tRNA-queuosine biosynthesis.</text>
</comment>
<comment type="subunit">
    <text evidence="1">Monomer.</text>
</comment>
<comment type="subcellular location">
    <subcellularLocation>
        <location evidence="1">Cytoplasm</location>
    </subcellularLocation>
</comment>
<comment type="similarity">
    <text evidence="1">Belongs to the QueA family.</text>
</comment>
<dbReference type="EC" id="2.4.99.17" evidence="1"/>
<dbReference type="EMBL" id="CP001063">
    <property type="protein sequence ID" value="ACD08904.1"/>
    <property type="molecule type" value="Genomic_DNA"/>
</dbReference>
<dbReference type="RefSeq" id="WP_001266490.1">
    <property type="nucleotide sequence ID" value="NC_010658.1"/>
</dbReference>
<dbReference type="SMR" id="B2U4K6"/>
<dbReference type="STRING" id="344609.SbBS512_E0324"/>
<dbReference type="KEGG" id="sbc:SbBS512_E0324"/>
<dbReference type="HOGENOM" id="CLU_039110_1_0_6"/>
<dbReference type="UniPathway" id="UPA00392"/>
<dbReference type="Proteomes" id="UP000001030">
    <property type="component" value="Chromosome"/>
</dbReference>
<dbReference type="GO" id="GO:0005737">
    <property type="term" value="C:cytoplasm"/>
    <property type="evidence" value="ECO:0007669"/>
    <property type="project" value="UniProtKB-SubCell"/>
</dbReference>
<dbReference type="GO" id="GO:0051075">
    <property type="term" value="F:S-adenosylmethionine:tRNA ribosyltransferase-isomerase activity"/>
    <property type="evidence" value="ECO:0007669"/>
    <property type="project" value="UniProtKB-EC"/>
</dbReference>
<dbReference type="GO" id="GO:0008616">
    <property type="term" value="P:queuosine biosynthetic process"/>
    <property type="evidence" value="ECO:0007669"/>
    <property type="project" value="UniProtKB-UniRule"/>
</dbReference>
<dbReference type="GO" id="GO:0002099">
    <property type="term" value="P:tRNA wobble guanine modification"/>
    <property type="evidence" value="ECO:0007669"/>
    <property type="project" value="TreeGrafter"/>
</dbReference>
<dbReference type="FunFam" id="2.40.10.240:FF:000001">
    <property type="entry name" value="S-adenosylmethionine:tRNA ribosyltransferase-isomerase"/>
    <property type="match status" value="1"/>
</dbReference>
<dbReference type="FunFam" id="3.40.1780.10:FF:000001">
    <property type="entry name" value="S-adenosylmethionine:tRNA ribosyltransferase-isomerase"/>
    <property type="match status" value="1"/>
</dbReference>
<dbReference type="Gene3D" id="2.40.10.240">
    <property type="entry name" value="QueA-like"/>
    <property type="match status" value="1"/>
</dbReference>
<dbReference type="Gene3D" id="3.40.1780.10">
    <property type="entry name" value="QueA-like"/>
    <property type="match status" value="1"/>
</dbReference>
<dbReference type="HAMAP" id="MF_00113">
    <property type="entry name" value="QueA"/>
    <property type="match status" value="1"/>
</dbReference>
<dbReference type="InterPro" id="IPR003699">
    <property type="entry name" value="QueA"/>
</dbReference>
<dbReference type="InterPro" id="IPR042118">
    <property type="entry name" value="QueA_dom1"/>
</dbReference>
<dbReference type="InterPro" id="IPR042119">
    <property type="entry name" value="QueA_dom2"/>
</dbReference>
<dbReference type="InterPro" id="IPR036100">
    <property type="entry name" value="QueA_sf"/>
</dbReference>
<dbReference type="NCBIfam" id="NF001140">
    <property type="entry name" value="PRK00147.1"/>
    <property type="match status" value="1"/>
</dbReference>
<dbReference type="NCBIfam" id="TIGR00113">
    <property type="entry name" value="queA"/>
    <property type="match status" value="1"/>
</dbReference>
<dbReference type="PANTHER" id="PTHR30307">
    <property type="entry name" value="S-ADENOSYLMETHIONINE:TRNA RIBOSYLTRANSFERASE-ISOMERASE"/>
    <property type="match status" value="1"/>
</dbReference>
<dbReference type="PANTHER" id="PTHR30307:SF0">
    <property type="entry name" value="S-ADENOSYLMETHIONINE:TRNA RIBOSYLTRANSFERASE-ISOMERASE"/>
    <property type="match status" value="1"/>
</dbReference>
<dbReference type="Pfam" id="PF02547">
    <property type="entry name" value="Queuosine_synth"/>
    <property type="match status" value="1"/>
</dbReference>
<dbReference type="SUPFAM" id="SSF111337">
    <property type="entry name" value="QueA-like"/>
    <property type="match status" value="1"/>
</dbReference>
<feature type="chain" id="PRO_1000094818" description="S-adenosylmethionine:tRNA ribosyltransferase-isomerase">
    <location>
        <begin position="1"/>
        <end position="356"/>
    </location>
</feature>
<protein>
    <recommendedName>
        <fullName evidence="1">S-adenosylmethionine:tRNA ribosyltransferase-isomerase</fullName>
        <ecNumber evidence="1">2.4.99.17</ecNumber>
    </recommendedName>
    <alternativeName>
        <fullName evidence="1">Queuosine biosynthesis protein QueA</fullName>
    </alternativeName>
</protein>
<name>QUEA_SHIB3</name>
<accession>B2U4K6</accession>
<evidence type="ECO:0000255" key="1">
    <source>
        <dbReference type="HAMAP-Rule" id="MF_00113"/>
    </source>
</evidence>
<proteinExistence type="inferred from homology"/>
<keyword id="KW-0963">Cytoplasm</keyword>
<keyword id="KW-0671">Queuosine biosynthesis</keyword>
<keyword id="KW-1185">Reference proteome</keyword>
<keyword id="KW-0949">S-adenosyl-L-methionine</keyword>
<keyword id="KW-0808">Transferase</keyword>
<reference key="1">
    <citation type="submission" date="2008-05" db="EMBL/GenBank/DDBJ databases">
        <title>Complete sequence of Shigella boydii serotype 18 strain BS512.</title>
        <authorList>
            <person name="Rasko D.A."/>
            <person name="Rosovitz M."/>
            <person name="Maurelli A.T."/>
            <person name="Myers G."/>
            <person name="Seshadri R."/>
            <person name="Cer R."/>
            <person name="Jiang L."/>
            <person name="Ravel J."/>
            <person name="Sebastian Y."/>
        </authorList>
    </citation>
    <scope>NUCLEOTIDE SEQUENCE [LARGE SCALE GENOMIC DNA]</scope>
    <source>
        <strain>CDC 3083-94 / BS512</strain>
    </source>
</reference>
<sequence length="356" mass="39449">MRVTDFSFELPESLIAHYPMPERSSCRLLSLDGPTGALTHGTFTDLLDKLNPGDLLVFNNTRVIPARLFGRKASGGKIEVLVERMLDDKRILAHIRASKAPKPGAELLLGDDESINATMTARHGALFEVEFNDDRSVLDILNSIGHMPLPPYIDRPDEDADRELYQTVYSEKPGAVAAPTAGLHFDEPLLEKLRAKGVEMAFVTLHVGAGTFQPVRVDTIEDHIMHSEYAEVPQDMVDAVLAAKARGNRVIAVGTTSVRSLESAAQAAKNDLIEPFFDDTQIFIYPGFQYKVVDALVTNFHLPESTLIMLVSAFAGYQHTMNAYKAAVEEKYRFFSYGDAMFITYNPQAINERVGE</sequence>
<organism>
    <name type="scientific">Shigella boydii serotype 18 (strain CDC 3083-94 / BS512)</name>
    <dbReference type="NCBI Taxonomy" id="344609"/>
    <lineage>
        <taxon>Bacteria</taxon>
        <taxon>Pseudomonadati</taxon>
        <taxon>Pseudomonadota</taxon>
        <taxon>Gammaproteobacteria</taxon>
        <taxon>Enterobacterales</taxon>
        <taxon>Enterobacteriaceae</taxon>
        <taxon>Shigella</taxon>
    </lineage>
</organism>